<evidence type="ECO:0000255" key="1">
    <source>
        <dbReference type="HAMAP-Rule" id="MF_00218"/>
    </source>
</evidence>
<proteinExistence type="inferred from homology"/>
<sequence length="353" mass="37560">MSTRRDLPQSPYLAAVAGRKPSRVPVWFMRQAGRSLPEYRALRRQHSMLAACFEPEVACEVTMQPIRRYHVDAAILFSDIVVPLRAAGVDLDIVADVGPVIAAPVRTVADVDAIKPIDPQSIAPVLDAVELLVAELGDTPLIGFAGAPFTLASYLVEGGPSRHHARTKAMMLAEPATWHALMTKLTDLTIEFLLGQIRAGVDAIQVFDSWAGMLSLADYRQYALPHSARVFATLAEHGVPMTHFGVGTAELLGAMSEAVKPGTAKVVGVDWRTALADAAARVQPGTALQGNLDPVVLLAGWPAVERAARAVVDDGRRAVDAGAAGYVFNLGHGVLPQTDPGVLTDLVSLVHSL</sequence>
<organism>
    <name type="scientific">Mycobacterium marinum (strain ATCC BAA-535 / M)</name>
    <dbReference type="NCBI Taxonomy" id="216594"/>
    <lineage>
        <taxon>Bacteria</taxon>
        <taxon>Bacillati</taxon>
        <taxon>Actinomycetota</taxon>
        <taxon>Actinomycetes</taxon>
        <taxon>Mycobacteriales</taxon>
        <taxon>Mycobacteriaceae</taxon>
        <taxon>Mycobacterium</taxon>
        <taxon>Mycobacterium ulcerans group</taxon>
    </lineage>
</organism>
<name>DCUP_MYCMM</name>
<comment type="function">
    <text evidence="1">Catalyzes the decarboxylation of four acetate groups of uroporphyrinogen-III to yield coproporphyrinogen-III.</text>
</comment>
<comment type="catalytic activity">
    <reaction evidence="1">
        <text>uroporphyrinogen III + 4 H(+) = coproporphyrinogen III + 4 CO2</text>
        <dbReference type="Rhea" id="RHEA:19865"/>
        <dbReference type="ChEBI" id="CHEBI:15378"/>
        <dbReference type="ChEBI" id="CHEBI:16526"/>
        <dbReference type="ChEBI" id="CHEBI:57308"/>
        <dbReference type="ChEBI" id="CHEBI:57309"/>
        <dbReference type="EC" id="4.1.1.37"/>
    </reaction>
</comment>
<comment type="pathway">
    <text evidence="1">Porphyrin-containing compound metabolism; protoporphyrin-IX biosynthesis; coproporphyrinogen-III from 5-aminolevulinate: step 4/4.</text>
</comment>
<comment type="subunit">
    <text evidence="1">Homodimer.</text>
</comment>
<comment type="subcellular location">
    <subcellularLocation>
        <location evidence="1">Cytoplasm</location>
    </subcellularLocation>
</comment>
<comment type="similarity">
    <text evidence="1">Belongs to the uroporphyrinogen decarboxylase family.</text>
</comment>
<protein>
    <recommendedName>
        <fullName evidence="1">Uroporphyrinogen decarboxylase</fullName>
        <shortName evidence="1">UPD</shortName>
        <shortName evidence="1">URO-D</shortName>
        <ecNumber evidence="1">4.1.1.37</ecNumber>
    </recommendedName>
</protein>
<keyword id="KW-0963">Cytoplasm</keyword>
<keyword id="KW-0210">Decarboxylase</keyword>
<keyword id="KW-0456">Lyase</keyword>
<keyword id="KW-0627">Porphyrin biosynthesis</keyword>
<keyword id="KW-1185">Reference proteome</keyword>
<feature type="chain" id="PRO_1000100001" description="Uroporphyrinogen decarboxylase">
    <location>
        <begin position="1"/>
        <end position="353"/>
    </location>
</feature>
<feature type="binding site" evidence="1">
    <location>
        <begin position="30"/>
        <end position="34"/>
    </location>
    <ligand>
        <name>substrate</name>
    </ligand>
</feature>
<feature type="binding site" evidence="1">
    <location>
        <position position="79"/>
    </location>
    <ligand>
        <name>substrate</name>
    </ligand>
</feature>
<feature type="binding site" evidence="1">
    <location>
        <position position="154"/>
    </location>
    <ligand>
        <name>substrate</name>
    </ligand>
</feature>
<feature type="binding site" evidence="1">
    <location>
        <position position="209"/>
    </location>
    <ligand>
        <name>substrate</name>
    </ligand>
</feature>
<feature type="binding site" evidence="1">
    <location>
        <position position="332"/>
    </location>
    <ligand>
        <name>substrate</name>
    </ligand>
</feature>
<feature type="site" description="Transition state stabilizer" evidence="1">
    <location>
        <position position="79"/>
    </location>
</feature>
<accession>B2HM23</accession>
<gene>
    <name evidence="1" type="primary">hemE</name>
    <name type="ordered locus">MMAR_2038</name>
</gene>
<dbReference type="EC" id="4.1.1.37" evidence="1"/>
<dbReference type="EMBL" id="CP000854">
    <property type="protein sequence ID" value="ACC40487.1"/>
    <property type="molecule type" value="Genomic_DNA"/>
</dbReference>
<dbReference type="RefSeq" id="WP_012393815.1">
    <property type="nucleotide sequence ID" value="NC_010612.1"/>
</dbReference>
<dbReference type="SMR" id="B2HM23"/>
<dbReference type="STRING" id="216594.MMAR_2038"/>
<dbReference type="KEGG" id="mmi:MMAR_2038"/>
<dbReference type="eggNOG" id="COG0407">
    <property type="taxonomic scope" value="Bacteria"/>
</dbReference>
<dbReference type="HOGENOM" id="CLU_040933_0_1_11"/>
<dbReference type="OrthoDB" id="9806656at2"/>
<dbReference type="UniPathway" id="UPA00251">
    <property type="reaction ID" value="UER00321"/>
</dbReference>
<dbReference type="Proteomes" id="UP000001190">
    <property type="component" value="Chromosome"/>
</dbReference>
<dbReference type="GO" id="GO:0005829">
    <property type="term" value="C:cytosol"/>
    <property type="evidence" value="ECO:0007669"/>
    <property type="project" value="TreeGrafter"/>
</dbReference>
<dbReference type="GO" id="GO:0004853">
    <property type="term" value="F:uroporphyrinogen decarboxylase activity"/>
    <property type="evidence" value="ECO:0007669"/>
    <property type="project" value="UniProtKB-UniRule"/>
</dbReference>
<dbReference type="GO" id="GO:0006782">
    <property type="term" value="P:protoporphyrinogen IX biosynthetic process"/>
    <property type="evidence" value="ECO:0007669"/>
    <property type="project" value="UniProtKB-UniRule"/>
</dbReference>
<dbReference type="CDD" id="cd00717">
    <property type="entry name" value="URO-D"/>
    <property type="match status" value="1"/>
</dbReference>
<dbReference type="FunFam" id="3.20.20.210:FF:000007">
    <property type="entry name" value="Uroporphyrinogen decarboxylase"/>
    <property type="match status" value="1"/>
</dbReference>
<dbReference type="Gene3D" id="3.20.20.210">
    <property type="match status" value="1"/>
</dbReference>
<dbReference type="HAMAP" id="MF_00218">
    <property type="entry name" value="URO_D"/>
    <property type="match status" value="1"/>
</dbReference>
<dbReference type="InterPro" id="IPR038071">
    <property type="entry name" value="UROD/MetE-like_sf"/>
</dbReference>
<dbReference type="InterPro" id="IPR006361">
    <property type="entry name" value="Uroporphyrinogen_deCO2ase_HemE"/>
</dbReference>
<dbReference type="InterPro" id="IPR000257">
    <property type="entry name" value="Uroporphyrinogen_deCOase"/>
</dbReference>
<dbReference type="NCBIfam" id="TIGR01464">
    <property type="entry name" value="hemE"/>
    <property type="match status" value="1"/>
</dbReference>
<dbReference type="PANTHER" id="PTHR21091">
    <property type="entry name" value="METHYLTETRAHYDROFOLATE:HOMOCYSTEINE METHYLTRANSFERASE RELATED"/>
    <property type="match status" value="1"/>
</dbReference>
<dbReference type="PANTHER" id="PTHR21091:SF169">
    <property type="entry name" value="UROPORPHYRINOGEN DECARBOXYLASE"/>
    <property type="match status" value="1"/>
</dbReference>
<dbReference type="Pfam" id="PF01208">
    <property type="entry name" value="URO-D"/>
    <property type="match status" value="1"/>
</dbReference>
<dbReference type="SUPFAM" id="SSF51726">
    <property type="entry name" value="UROD/MetE-like"/>
    <property type="match status" value="1"/>
</dbReference>
<dbReference type="PROSITE" id="PS00906">
    <property type="entry name" value="UROD_1"/>
    <property type="match status" value="1"/>
</dbReference>
<dbReference type="PROSITE" id="PS00907">
    <property type="entry name" value="UROD_2"/>
    <property type="match status" value="1"/>
</dbReference>
<reference key="1">
    <citation type="journal article" date="2008" name="Genome Res.">
        <title>Insights from the complete genome sequence of Mycobacterium marinum on the evolution of Mycobacterium tuberculosis.</title>
        <authorList>
            <person name="Stinear T.P."/>
            <person name="Seemann T."/>
            <person name="Harrison P.F."/>
            <person name="Jenkin G.A."/>
            <person name="Davies J.K."/>
            <person name="Johnson P.D."/>
            <person name="Abdellah Z."/>
            <person name="Arrowsmith C."/>
            <person name="Chillingworth T."/>
            <person name="Churcher C."/>
            <person name="Clarke K."/>
            <person name="Cronin A."/>
            <person name="Davis P."/>
            <person name="Goodhead I."/>
            <person name="Holroyd N."/>
            <person name="Jagels K."/>
            <person name="Lord A."/>
            <person name="Moule S."/>
            <person name="Mungall K."/>
            <person name="Norbertczak H."/>
            <person name="Quail M.A."/>
            <person name="Rabbinowitsch E."/>
            <person name="Walker D."/>
            <person name="White B."/>
            <person name="Whitehead S."/>
            <person name="Small P.L."/>
            <person name="Brosch R."/>
            <person name="Ramakrishnan L."/>
            <person name="Fischbach M.A."/>
            <person name="Parkhill J."/>
            <person name="Cole S.T."/>
        </authorList>
    </citation>
    <scope>NUCLEOTIDE SEQUENCE [LARGE SCALE GENOMIC DNA]</scope>
    <source>
        <strain>ATCC BAA-535 / M</strain>
    </source>
</reference>